<proteinExistence type="evidence at protein level"/>
<comment type="function">
    <text evidence="2">Required for flagellum formation.</text>
</comment>
<comment type="subcellular location">
    <subcellularLocation>
        <location evidence="2">Cytoplasm</location>
        <location evidence="2">Cytoskeleton</location>
        <location evidence="2">Flagellum basal body</location>
    </subcellularLocation>
    <subcellularLocation>
        <location evidence="2">Cell projection</location>
        <location evidence="2">Cilium</location>
        <location evidence="2">Flagellum</location>
    </subcellularLocation>
    <text>ColocaliZes with intraflagellar transport (IFT) proteins at the basal body and in the flagellum matrix.</text>
</comment>
<comment type="similarity">
    <text evidence="3">Belongs to the small GTPase superfamily. Rab family.</text>
</comment>
<protein>
    <recommendedName>
        <fullName>Intraflagellar transport protein 22</fullName>
    </recommendedName>
</protein>
<accession>Q381A3</accession>
<organism>
    <name type="scientific">Trypanosoma brucei brucei (strain 927/4 GUTat10.1)</name>
    <dbReference type="NCBI Taxonomy" id="185431"/>
    <lineage>
        <taxon>Eukaryota</taxon>
        <taxon>Discoba</taxon>
        <taxon>Euglenozoa</taxon>
        <taxon>Kinetoplastea</taxon>
        <taxon>Metakinetoplastina</taxon>
        <taxon>Trypanosomatida</taxon>
        <taxon>Trypanosomatidae</taxon>
        <taxon>Trypanosoma</taxon>
    </lineage>
</organism>
<sequence>MSDDLVKILVLGPSKSGKSTVTNFLAGTRDTPTKEYHETNPLRVLEVEIALDDTRRSGRQAAGLKKAVVQLWDVGGSSKHQAGWPAIASNADGIIYVFNPEVKGSEKELLLWYKNFALNQDELDDDNNFKMRVTDGHSLIFSHHSSLPEFAVGDNAIPPMPKQLQGIRALETSLDYQSDNFKEAFDALVEQIIASRLAAEENDLLQKEREAKDYPRLKR</sequence>
<dbReference type="EMBL" id="CH464491">
    <property type="protein sequence ID" value="EAN80628.1"/>
    <property type="molecule type" value="Genomic_DNA"/>
</dbReference>
<dbReference type="RefSeq" id="XP_829740.1">
    <property type="nucleotide sequence ID" value="XM_824647.1"/>
</dbReference>
<dbReference type="PDB" id="6IA7">
    <property type="method" value="X-ray"/>
    <property type="resolution" value="2.30 A"/>
    <property type="chains" value="A/B=1-219"/>
</dbReference>
<dbReference type="PDB" id="6IAE">
    <property type="method" value="X-ray"/>
    <property type="resolution" value="2.49 A"/>
    <property type="chains" value="A/B=1-219"/>
</dbReference>
<dbReference type="PDB" id="6IAN">
    <property type="method" value="X-ray"/>
    <property type="resolution" value="3.20 A"/>
    <property type="chains" value="E=1-219"/>
</dbReference>
<dbReference type="PDBsum" id="6IA7"/>
<dbReference type="PDBsum" id="6IAE"/>
<dbReference type="PDBsum" id="6IAN"/>
<dbReference type="SMR" id="Q381A3"/>
<dbReference type="STRING" id="185431.Q381A3"/>
<dbReference type="PaxDb" id="5691-EAN80628"/>
<dbReference type="GeneID" id="3664573"/>
<dbReference type="KEGG" id="tbr:Tb11.01.8590"/>
<dbReference type="VEuPathDB" id="TriTrypDB:Tb927.11.16830"/>
<dbReference type="eggNOG" id="ENOG502RXD4">
    <property type="taxonomic scope" value="Eukaryota"/>
</dbReference>
<dbReference type="InParanoid" id="Q381A3"/>
<dbReference type="OrthoDB" id="275177at2759"/>
<dbReference type="Proteomes" id="UP000008524">
    <property type="component" value="Chromosome 11 Scaffold 1"/>
</dbReference>
<dbReference type="GO" id="GO:0036064">
    <property type="term" value="C:ciliary basal body"/>
    <property type="evidence" value="ECO:0000314"/>
    <property type="project" value="GeneDB"/>
</dbReference>
<dbReference type="GO" id="GO:0005929">
    <property type="term" value="C:cilium"/>
    <property type="evidence" value="ECO:0000314"/>
    <property type="project" value="UniProtKB"/>
</dbReference>
<dbReference type="GO" id="GO:0005737">
    <property type="term" value="C:cytoplasm"/>
    <property type="evidence" value="ECO:0000314"/>
    <property type="project" value="GeneDB"/>
</dbReference>
<dbReference type="GO" id="GO:0012505">
    <property type="term" value="C:endomembrane system"/>
    <property type="evidence" value="ECO:0000318"/>
    <property type="project" value="GO_Central"/>
</dbReference>
<dbReference type="GO" id="GO:0030992">
    <property type="term" value="C:intraciliary transport particle B"/>
    <property type="evidence" value="ECO:0000353"/>
    <property type="project" value="GeneDB"/>
</dbReference>
<dbReference type="GO" id="GO:0031514">
    <property type="term" value="C:motile cilium"/>
    <property type="evidence" value="ECO:0007669"/>
    <property type="project" value="UniProtKB-SubCell"/>
</dbReference>
<dbReference type="GO" id="GO:0005525">
    <property type="term" value="F:GTP binding"/>
    <property type="evidence" value="ECO:0007669"/>
    <property type="project" value="UniProtKB-KW"/>
</dbReference>
<dbReference type="GO" id="GO:0003924">
    <property type="term" value="F:GTPase activity"/>
    <property type="evidence" value="ECO:0000318"/>
    <property type="project" value="GO_Central"/>
</dbReference>
<dbReference type="GO" id="GO:0060271">
    <property type="term" value="P:cilium assembly"/>
    <property type="evidence" value="ECO:0000315"/>
    <property type="project" value="UniProtKB"/>
</dbReference>
<dbReference type="GO" id="GO:0006886">
    <property type="term" value="P:intracellular protein transport"/>
    <property type="evidence" value="ECO:0000318"/>
    <property type="project" value="GO_Central"/>
</dbReference>
<dbReference type="CDD" id="cd00882">
    <property type="entry name" value="Ras_like_GTPase"/>
    <property type="match status" value="1"/>
</dbReference>
<dbReference type="FunFam" id="3.40.50.300:FF:002311">
    <property type="entry name" value="Intraflagellar transport protein 22"/>
    <property type="match status" value="1"/>
</dbReference>
<dbReference type="Gene3D" id="3.40.50.300">
    <property type="entry name" value="P-loop containing nucleotide triphosphate hydrolases"/>
    <property type="match status" value="1"/>
</dbReference>
<dbReference type="InterPro" id="IPR027417">
    <property type="entry name" value="P-loop_NTPase"/>
</dbReference>
<dbReference type="Pfam" id="PF08477">
    <property type="entry name" value="Roc"/>
    <property type="match status" value="1"/>
</dbReference>
<dbReference type="SUPFAM" id="SSF52540">
    <property type="entry name" value="P-loop containing nucleoside triphosphate hydrolases"/>
    <property type="match status" value="1"/>
</dbReference>
<name>IFT22_TRYB2</name>
<keyword id="KW-0002">3D-structure</keyword>
<keyword id="KW-0966">Cell projection</keyword>
<keyword id="KW-0969">Cilium</keyword>
<keyword id="KW-0963">Cytoplasm</keyword>
<keyword id="KW-0206">Cytoskeleton</keyword>
<keyword id="KW-0282">Flagellum</keyword>
<keyword id="KW-0342">GTP-binding</keyword>
<keyword id="KW-0547">Nucleotide-binding</keyword>
<keyword id="KW-1185">Reference proteome</keyword>
<evidence type="ECO:0000250" key="1"/>
<evidence type="ECO:0000269" key="2">
    <source>
    </source>
</evidence>
<evidence type="ECO:0000305" key="3"/>
<evidence type="ECO:0000312" key="4">
    <source>
        <dbReference type="Proteomes" id="UP000008524"/>
    </source>
</evidence>
<evidence type="ECO:0007829" key="5">
    <source>
        <dbReference type="PDB" id="6IA7"/>
    </source>
</evidence>
<evidence type="ECO:0007829" key="6">
    <source>
        <dbReference type="PDB" id="6IAN"/>
    </source>
</evidence>
<feature type="chain" id="PRO_0000429421" description="Intraflagellar transport protein 22">
    <location>
        <begin position="1"/>
        <end position="219"/>
    </location>
</feature>
<feature type="binding site" evidence="1">
    <location>
        <begin position="12"/>
        <end position="19"/>
    </location>
    <ligand>
        <name>GTP</name>
        <dbReference type="ChEBI" id="CHEBI:37565"/>
    </ligand>
</feature>
<feature type="binding site" evidence="1">
    <location>
        <begin position="72"/>
        <end position="79"/>
    </location>
    <ligand>
        <name>GTP</name>
        <dbReference type="ChEBI" id="CHEBI:37565"/>
    </ligand>
</feature>
<feature type="strand" evidence="5">
    <location>
        <begin position="6"/>
        <end position="11"/>
    </location>
</feature>
<feature type="helix" evidence="5">
    <location>
        <begin position="18"/>
        <end position="25"/>
    </location>
</feature>
<feature type="strand" evidence="5">
    <location>
        <begin position="41"/>
        <end position="47"/>
    </location>
</feature>
<feature type="strand" evidence="5">
    <location>
        <begin position="69"/>
        <end position="74"/>
    </location>
</feature>
<feature type="turn" evidence="6">
    <location>
        <begin position="80"/>
        <end position="83"/>
    </location>
</feature>
<feature type="turn" evidence="5">
    <location>
        <begin position="85"/>
        <end position="87"/>
    </location>
</feature>
<feature type="strand" evidence="5">
    <location>
        <begin position="93"/>
        <end position="98"/>
    </location>
</feature>
<feature type="helix" evidence="5">
    <location>
        <begin position="105"/>
        <end position="116"/>
    </location>
</feature>
<feature type="strand" evidence="5">
    <location>
        <begin position="139"/>
        <end position="143"/>
    </location>
</feature>
<feature type="strand" evidence="6">
    <location>
        <begin position="145"/>
        <end position="147"/>
    </location>
</feature>
<feature type="strand" evidence="5">
    <location>
        <begin position="149"/>
        <end position="151"/>
    </location>
</feature>
<feature type="turn" evidence="5">
    <location>
        <begin position="162"/>
        <end position="166"/>
    </location>
</feature>
<feature type="strand" evidence="5">
    <location>
        <begin position="169"/>
        <end position="172"/>
    </location>
</feature>
<feature type="strand" evidence="5">
    <location>
        <begin position="174"/>
        <end position="177"/>
    </location>
</feature>
<feature type="helix" evidence="5">
    <location>
        <begin position="181"/>
        <end position="198"/>
    </location>
</feature>
<reference key="1">
    <citation type="journal article" date="2005" name="Science">
        <title>The genome of the African trypanosome Trypanosoma brucei.</title>
        <authorList>
            <person name="Berriman M."/>
            <person name="Ghedin E."/>
            <person name="Hertz-Fowler C."/>
            <person name="Blandin G."/>
            <person name="Renauld H."/>
            <person name="Bartholomeu D.C."/>
            <person name="Lennard N.J."/>
            <person name="Caler E."/>
            <person name="Hamlin N.E."/>
            <person name="Haas B."/>
            <person name="Bohme U."/>
            <person name="Hannick L."/>
            <person name="Aslett M.A."/>
            <person name="Shallom J."/>
            <person name="Marcello L."/>
            <person name="Hou L."/>
            <person name="Wickstead B."/>
            <person name="Alsmark U.C.M."/>
            <person name="Arrowsmith C."/>
            <person name="Atkin R.J."/>
            <person name="Barron A.J."/>
            <person name="Bringaud F."/>
            <person name="Brooks K."/>
            <person name="Carrington M."/>
            <person name="Cherevach I."/>
            <person name="Chillingworth T.J."/>
            <person name="Churcher C."/>
            <person name="Clark L.N."/>
            <person name="Corton C.H."/>
            <person name="Cronin A."/>
            <person name="Davies R.M."/>
            <person name="Doggett J."/>
            <person name="Djikeng A."/>
            <person name="Feldblyum T."/>
            <person name="Field M.C."/>
            <person name="Fraser A."/>
            <person name="Goodhead I."/>
            <person name="Hance Z."/>
            <person name="Harper D."/>
            <person name="Harris B.R."/>
            <person name="Hauser H."/>
            <person name="Hostetler J."/>
            <person name="Ivens A."/>
            <person name="Jagels K."/>
            <person name="Johnson D."/>
            <person name="Johnson J."/>
            <person name="Jones K."/>
            <person name="Kerhornou A.X."/>
            <person name="Koo H."/>
            <person name="Larke N."/>
            <person name="Landfear S."/>
            <person name="Larkin C."/>
            <person name="Leech V."/>
            <person name="Line A."/>
            <person name="Lord A."/>
            <person name="Macleod A."/>
            <person name="Mooney P.J."/>
            <person name="Moule S."/>
            <person name="Martin D.M."/>
            <person name="Morgan G.W."/>
            <person name="Mungall K."/>
            <person name="Norbertczak H."/>
            <person name="Ormond D."/>
            <person name="Pai G."/>
            <person name="Peacock C.S."/>
            <person name="Peterson J."/>
            <person name="Quail M.A."/>
            <person name="Rabbinowitsch E."/>
            <person name="Rajandream M.A."/>
            <person name="Reitter C."/>
            <person name="Salzberg S.L."/>
            <person name="Sanders M."/>
            <person name="Schobel S."/>
            <person name="Sharp S."/>
            <person name="Simmonds M."/>
            <person name="Simpson A.J."/>
            <person name="Tallon L."/>
            <person name="Turner C.M."/>
            <person name="Tait A."/>
            <person name="Tivey A.R."/>
            <person name="Van Aken S."/>
            <person name="Walker D."/>
            <person name="Wanless D."/>
            <person name="Wang S."/>
            <person name="White B."/>
            <person name="White O."/>
            <person name="Whitehead S."/>
            <person name="Woodward J."/>
            <person name="Wortman J."/>
            <person name="Adams M.D."/>
            <person name="Embley T.M."/>
            <person name="Gull K."/>
            <person name="Ullu E."/>
            <person name="Barry J.D."/>
            <person name="Fairlamb A.H."/>
            <person name="Opperdoes F."/>
            <person name="Barrell B.G."/>
            <person name="Donelson J.E."/>
            <person name="Hall N."/>
            <person name="Fraser C.M."/>
            <person name="Melville S.E."/>
            <person name="El-Sayed N.M.A."/>
        </authorList>
    </citation>
    <scope>NUCLEOTIDE SEQUENCE [LARGE SCALE GENOMIC DNA]</scope>
    <source>
        <strain evidence="4">927/4 GUTat10.1</strain>
    </source>
</reference>
<reference key="2">
    <citation type="journal article" date="2009" name="J. Cell Sci.">
        <title>A novel function for the atypical small G protein Rab-like 5 in the assembly of the trypanosome flagellum.</title>
        <authorList>
            <person name="Adhiambo C."/>
            <person name="Blisnick T."/>
            <person name="Toutirais G."/>
            <person name="Delannoy E."/>
            <person name="Bastin P."/>
        </authorList>
    </citation>
    <scope>FUNCTION</scope>
    <scope>SUBCELLULAR LOCATION</scope>
</reference>
<gene>
    <name type="primary">IFT22</name>
    <name type="ORF">Tb11.01.8590</name>
</gene>